<name>RL17_DESPS</name>
<reference key="1">
    <citation type="journal article" date="2004" name="Environ. Microbiol.">
        <title>The genome of Desulfotalea psychrophila, a sulfate-reducing bacterium from permanently cold Arctic sediments.</title>
        <authorList>
            <person name="Rabus R."/>
            <person name="Ruepp A."/>
            <person name="Frickey T."/>
            <person name="Rattei T."/>
            <person name="Fartmann B."/>
            <person name="Stark M."/>
            <person name="Bauer M."/>
            <person name="Zibat A."/>
            <person name="Lombardot T."/>
            <person name="Becker I."/>
            <person name="Amann J."/>
            <person name="Gellner K."/>
            <person name="Teeling H."/>
            <person name="Leuschner W.D."/>
            <person name="Gloeckner F.-O."/>
            <person name="Lupas A.N."/>
            <person name="Amann R."/>
            <person name="Klenk H.-P."/>
        </authorList>
    </citation>
    <scope>NUCLEOTIDE SEQUENCE [LARGE SCALE GENOMIC DNA]</scope>
    <source>
        <strain>DSM 12343 / LSv54</strain>
    </source>
</reference>
<feature type="chain" id="PRO_0000267866" description="Large ribosomal subunit protein bL17">
    <location>
        <begin position="1"/>
        <end position="129"/>
    </location>
</feature>
<keyword id="KW-1185">Reference proteome</keyword>
<keyword id="KW-0687">Ribonucleoprotein</keyword>
<keyword id="KW-0689">Ribosomal protein</keyword>
<proteinExistence type="inferred from homology"/>
<dbReference type="EMBL" id="CR522870">
    <property type="protein sequence ID" value="CAG35882.1"/>
    <property type="molecule type" value="Genomic_DNA"/>
</dbReference>
<dbReference type="RefSeq" id="WP_011188394.1">
    <property type="nucleotide sequence ID" value="NC_006138.1"/>
</dbReference>
<dbReference type="SMR" id="Q6AP42"/>
<dbReference type="STRING" id="177439.DP1153"/>
<dbReference type="KEGG" id="dps:DP1153"/>
<dbReference type="eggNOG" id="COG0203">
    <property type="taxonomic scope" value="Bacteria"/>
</dbReference>
<dbReference type="HOGENOM" id="CLU_074407_2_2_7"/>
<dbReference type="OrthoDB" id="9809073at2"/>
<dbReference type="Proteomes" id="UP000000602">
    <property type="component" value="Chromosome"/>
</dbReference>
<dbReference type="GO" id="GO:0022625">
    <property type="term" value="C:cytosolic large ribosomal subunit"/>
    <property type="evidence" value="ECO:0007669"/>
    <property type="project" value="TreeGrafter"/>
</dbReference>
<dbReference type="GO" id="GO:0003735">
    <property type="term" value="F:structural constituent of ribosome"/>
    <property type="evidence" value="ECO:0007669"/>
    <property type="project" value="InterPro"/>
</dbReference>
<dbReference type="GO" id="GO:0006412">
    <property type="term" value="P:translation"/>
    <property type="evidence" value="ECO:0007669"/>
    <property type="project" value="UniProtKB-UniRule"/>
</dbReference>
<dbReference type="FunFam" id="3.90.1030.10:FF:000001">
    <property type="entry name" value="50S ribosomal protein L17"/>
    <property type="match status" value="1"/>
</dbReference>
<dbReference type="Gene3D" id="3.90.1030.10">
    <property type="entry name" value="Ribosomal protein L17"/>
    <property type="match status" value="1"/>
</dbReference>
<dbReference type="HAMAP" id="MF_01368">
    <property type="entry name" value="Ribosomal_bL17"/>
    <property type="match status" value="1"/>
</dbReference>
<dbReference type="InterPro" id="IPR000456">
    <property type="entry name" value="Ribosomal_bL17"/>
</dbReference>
<dbReference type="InterPro" id="IPR047859">
    <property type="entry name" value="Ribosomal_bL17_CS"/>
</dbReference>
<dbReference type="InterPro" id="IPR036373">
    <property type="entry name" value="Ribosomal_bL17_sf"/>
</dbReference>
<dbReference type="NCBIfam" id="TIGR00059">
    <property type="entry name" value="L17"/>
    <property type="match status" value="1"/>
</dbReference>
<dbReference type="PANTHER" id="PTHR14413:SF16">
    <property type="entry name" value="LARGE RIBOSOMAL SUBUNIT PROTEIN BL17M"/>
    <property type="match status" value="1"/>
</dbReference>
<dbReference type="PANTHER" id="PTHR14413">
    <property type="entry name" value="RIBOSOMAL PROTEIN L17"/>
    <property type="match status" value="1"/>
</dbReference>
<dbReference type="Pfam" id="PF01196">
    <property type="entry name" value="Ribosomal_L17"/>
    <property type="match status" value="1"/>
</dbReference>
<dbReference type="SUPFAM" id="SSF64263">
    <property type="entry name" value="Prokaryotic ribosomal protein L17"/>
    <property type="match status" value="1"/>
</dbReference>
<dbReference type="PROSITE" id="PS01167">
    <property type="entry name" value="RIBOSOMAL_L17"/>
    <property type="match status" value="1"/>
</dbReference>
<accession>Q6AP42</accession>
<gene>
    <name evidence="1" type="primary">rplQ</name>
    <name type="ordered locus">DP1153</name>
</gene>
<sequence>MRHRYSGRKLGRTSSHRDAMFRNMVTSLFEHERIVTTKEKAKELRPIAEKMITLGKRGDLHARRQALSYVRCAGVVHKLFGEIAEQFADRKGGYTRIIQTGVRRGDNASMAIIELVGYDETVAAATTEA</sequence>
<organism>
    <name type="scientific">Desulfotalea psychrophila (strain LSv54 / DSM 12343)</name>
    <dbReference type="NCBI Taxonomy" id="177439"/>
    <lineage>
        <taxon>Bacteria</taxon>
        <taxon>Pseudomonadati</taxon>
        <taxon>Thermodesulfobacteriota</taxon>
        <taxon>Desulfobulbia</taxon>
        <taxon>Desulfobulbales</taxon>
        <taxon>Desulfocapsaceae</taxon>
        <taxon>Desulfotalea</taxon>
    </lineage>
</organism>
<comment type="subunit">
    <text evidence="1">Part of the 50S ribosomal subunit. Contacts protein L32.</text>
</comment>
<comment type="similarity">
    <text evidence="1">Belongs to the bacterial ribosomal protein bL17 family.</text>
</comment>
<protein>
    <recommendedName>
        <fullName evidence="1">Large ribosomal subunit protein bL17</fullName>
    </recommendedName>
    <alternativeName>
        <fullName evidence="2">50S ribosomal protein L17</fullName>
    </alternativeName>
</protein>
<evidence type="ECO:0000255" key="1">
    <source>
        <dbReference type="HAMAP-Rule" id="MF_01368"/>
    </source>
</evidence>
<evidence type="ECO:0000305" key="2"/>